<keyword id="KW-0028">Amino-acid biosynthesis</keyword>
<keyword id="KW-0057">Aromatic amino acid biosynthesis</keyword>
<keyword id="KW-0274">FAD</keyword>
<keyword id="KW-0285">Flavoprotein</keyword>
<keyword id="KW-0288">FMN</keyword>
<keyword id="KW-0456">Lyase</keyword>
<keyword id="KW-0521">NADP</keyword>
<protein>
    <recommendedName>
        <fullName evidence="1">Chorismate synthase</fullName>
        <shortName evidence="1">CS</shortName>
        <ecNumber evidence="1">4.2.3.5</ecNumber>
    </recommendedName>
    <alternativeName>
        <fullName evidence="1">5-enolpyruvylshikimate-3-phosphate phospholyase</fullName>
    </alternativeName>
</protein>
<gene>
    <name evidence="1" type="primary">aroC</name>
    <name type="ordered locus">SP70585_1413</name>
</gene>
<name>AROC_STRP7</name>
<feature type="chain" id="PRO_1000132789" description="Chorismate synthase">
    <location>
        <begin position="1"/>
        <end position="388"/>
    </location>
</feature>
<feature type="binding site" evidence="1">
    <location>
        <position position="39"/>
    </location>
    <ligand>
        <name>NADP(+)</name>
        <dbReference type="ChEBI" id="CHEBI:58349"/>
    </ligand>
</feature>
<feature type="binding site" evidence="1">
    <location>
        <position position="45"/>
    </location>
    <ligand>
        <name>NADP(+)</name>
        <dbReference type="ChEBI" id="CHEBI:58349"/>
    </ligand>
</feature>
<feature type="binding site" evidence="1">
    <location>
        <begin position="130"/>
        <end position="132"/>
    </location>
    <ligand>
        <name>FMN</name>
        <dbReference type="ChEBI" id="CHEBI:58210"/>
    </ligand>
</feature>
<feature type="binding site" evidence="1">
    <location>
        <begin position="251"/>
        <end position="252"/>
    </location>
    <ligand>
        <name>FMN</name>
        <dbReference type="ChEBI" id="CHEBI:58210"/>
    </ligand>
</feature>
<feature type="binding site" evidence="1">
    <location>
        <position position="296"/>
    </location>
    <ligand>
        <name>FMN</name>
        <dbReference type="ChEBI" id="CHEBI:58210"/>
    </ligand>
</feature>
<feature type="binding site" evidence="1">
    <location>
        <begin position="311"/>
        <end position="315"/>
    </location>
    <ligand>
        <name>FMN</name>
        <dbReference type="ChEBI" id="CHEBI:58210"/>
    </ligand>
</feature>
<feature type="binding site" evidence="1">
    <location>
        <position position="337"/>
    </location>
    <ligand>
        <name>FMN</name>
        <dbReference type="ChEBI" id="CHEBI:58210"/>
    </ligand>
</feature>
<dbReference type="EC" id="4.2.3.5" evidence="1"/>
<dbReference type="EMBL" id="CP000918">
    <property type="protein sequence ID" value="ACO16650.1"/>
    <property type="molecule type" value="Genomic_DNA"/>
</dbReference>
<dbReference type="RefSeq" id="WP_001269866.1">
    <property type="nucleotide sequence ID" value="NC_012468.1"/>
</dbReference>
<dbReference type="SMR" id="C1C7X5"/>
<dbReference type="KEGG" id="snm:SP70585_1413"/>
<dbReference type="HOGENOM" id="CLU_034547_2_0_9"/>
<dbReference type="UniPathway" id="UPA00053">
    <property type="reaction ID" value="UER00090"/>
</dbReference>
<dbReference type="Proteomes" id="UP000002211">
    <property type="component" value="Chromosome"/>
</dbReference>
<dbReference type="GO" id="GO:0005829">
    <property type="term" value="C:cytosol"/>
    <property type="evidence" value="ECO:0007669"/>
    <property type="project" value="TreeGrafter"/>
</dbReference>
<dbReference type="GO" id="GO:0004107">
    <property type="term" value="F:chorismate synthase activity"/>
    <property type="evidence" value="ECO:0007669"/>
    <property type="project" value="UniProtKB-UniRule"/>
</dbReference>
<dbReference type="GO" id="GO:0010181">
    <property type="term" value="F:FMN binding"/>
    <property type="evidence" value="ECO:0007669"/>
    <property type="project" value="TreeGrafter"/>
</dbReference>
<dbReference type="GO" id="GO:0008652">
    <property type="term" value="P:amino acid biosynthetic process"/>
    <property type="evidence" value="ECO:0007669"/>
    <property type="project" value="UniProtKB-KW"/>
</dbReference>
<dbReference type="GO" id="GO:0009073">
    <property type="term" value="P:aromatic amino acid family biosynthetic process"/>
    <property type="evidence" value="ECO:0007669"/>
    <property type="project" value="UniProtKB-KW"/>
</dbReference>
<dbReference type="GO" id="GO:0009423">
    <property type="term" value="P:chorismate biosynthetic process"/>
    <property type="evidence" value="ECO:0007669"/>
    <property type="project" value="UniProtKB-UniRule"/>
</dbReference>
<dbReference type="CDD" id="cd07304">
    <property type="entry name" value="Chorismate_synthase"/>
    <property type="match status" value="1"/>
</dbReference>
<dbReference type="FunFam" id="3.60.150.10:FF:000002">
    <property type="entry name" value="Chorismate synthase"/>
    <property type="match status" value="1"/>
</dbReference>
<dbReference type="Gene3D" id="3.60.150.10">
    <property type="entry name" value="Chorismate synthase AroC"/>
    <property type="match status" value="1"/>
</dbReference>
<dbReference type="HAMAP" id="MF_00300">
    <property type="entry name" value="Chorismate_synth"/>
    <property type="match status" value="1"/>
</dbReference>
<dbReference type="InterPro" id="IPR000453">
    <property type="entry name" value="Chorismate_synth"/>
</dbReference>
<dbReference type="InterPro" id="IPR035904">
    <property type="entry name" value="Chorismate_synth_AroC_sf"/>
</dbReference>
<dbReference type="InterPro" id="IPR020541">
    <property type="entry name" value="Chorismate_synthase_CS"/>
</dbReference>
<dbReference type="NCBIfam" id="TIGR00033">
    <property type="entry name" value="aroC"/>
    <property type="match status" value="1"/>
</dbReference>
<dbReference type="NCBIfam" id="NF003793">
    <property type="entry name" value="PRK05382.1"/>
    <property type="match status" value="1"/>
</dbReference>
<dbReference type="PANTHER" id="PTHR21085">
    <property type="entry name" value="CHORISMATE SYNTHASE"/>
    <property type="match status" value="1"/>
</dbReference>
<dbReference type="PANTHER" id="PTHR21085:SF0">
    <property type="entry name" value="CHORISMATE SYNTHASE"/>
    <property type="match status" value="1"/>
</dbReference>
<dbReference type="Pfam" id="PF01264">
    <property type="entry name" value="Chorismate_synt"/>
    <property type="match status" value="1"/>
</dbReference>
<dbReference type="PIRSF" id="PIRSF001456">
    <property type="entry name" value="Chorismate_synth"/>
    <property type="match status" value="1"/>
</dbReference>
<dbReference type="SUPFAM" id="SSF103263">
    <property type="entry name" value="Chorismate synthase, AroC"/>
    <property type="match status" value="1"/>
</dbReference>
<dbReference type="PROSITE" id="PS00787">
    <property type="entry name" value="CHORISMATE_SYNTHASE_1"/>
    <property type="match status" value="1"/>
</dbReference>
<dbReference type="PROSITE" id="PS00788">
    <property type="entry name" value="CHORISMATE_SYNTHASE_2"/>
    <property type="match status" value="1"/>
</dbReference>
<dbReference type="PROSITE" id="PS00789">
    <property type="entry name" value="CHORISMATE_SYNTHASE_3"/>
    <property type="match status" value="1"/>
</dbReference>
<evidence type="ECO:0000255" key="1">
    <source>
        <dbReference type="HAMAP-Rule" id="MF_00300"/>
    </source>
</evidence>
<proteinExistence type="inferred from homology"/>
<sequence length="388" mass="42845">MRYLTAGESHGPRLTAIIEGIPAGLPLTAEDINEDLRRRQGGYGRGGRMKIESDQVVFTSGVRHGKTTGAPITMDVINKDHQKWLDIMSAEDIEDRLKSKRKITHPRPGHADLVGGIKYRFDDLRNSLERSSARETTMRVAVGAVAKRLLAELDMEIANHVVVFGGKEIDVPENLTVAEIKQRAAQSEVSIVNQEREQEIKDYIDQIKRDGDTIGGVVETVVGGVPVGLGSYVQWDRKLDARLAQAVVSINAFKGVEFGLGFEAGYRKGSQVMDEILWSKEDGYTRRTNNLGGFEGGMTNGQPIVVRGVMKPIPTLYKPLMSVDIETHEPYKATVERSDPTALPAAGMVMEAVVATVLAQEILEKFSSDNLEELKEAVAKHRDYTKNY</sequence>
<comment type="function">
    <text evidence="1">Catalyzes the anti-1,4-elimination of the C-3 phosphate and the C-6 proR hydrogen from 5-enolpyruvylshikimate-3-phosphate (EPSP) to yield chorismate, which is the branch point compound that serves as the starting substrate for the three terminal pathways of aromatic amino acid biosynthesis. This reaction introduces a second double bond into the aromatic ring system.</text>
</comment>
<comment type="catalytic activity">
    <reaction evidence="1">
        <text>5-O-(1-carboxyvinyl)-3-phosphoshikimate = chorismate + phosphate</text>
        <dbReference type="Rhea" id="RHEA:21020"/>
        <dbReference type="ChEBI" id="CHEBI:29748"/>
        <dbReference type="ChEBI" id="CHEBI:43474"/>
        <dbReference type="ChEBI" id="CHEBI:57701"/>
        <dbReference type="EC" id="4.2.3.5"/>
    </reaction>
</comment>
<comment type="cofactor">
    <cofactor evidence="1">
        <name>FMNH2</name>
        <dbReference type="ChEBI" id="CHEBI:57618"/>
    </cofactor>
    <text evidence="1">Reduced FMN (FMNH(2)).</text>
</comment>
<comment type="pathway">
    <text evidence="1">Metabolic intermediate biosynthesis; chorismate biosynthesis; chorismate from D-erythrose 4-phosphate and phosphoenolpyruvate: step 7/7.</text>
</comment>
<comment type="subunit">
    <text evidence="1">Homotetramer.</text>
</comment>
<comment type="similarity">
    <text evidence="1">Belongs to the chorismate synthase family.</text>
</comment>
<accession>C1C7X5</accession>
<organism>
    <name type="scientific">Streptococcus pneumoniae (strain 70585)</name>
    <dbReference type="NCBI Taxonomy" id="488221"/>
    <lineage>
        <taxon>Bacteria</taxon>
        <taxon>Bacillati</taxon>
        <taxon>Bacillota</taxon>
        <taxon>Bacilli</taxon>
        <taxon>Lactobacillales</taxon>
        <taxon>Streptococcaceae</taxon>
        <taxon>Streptococcus</taxon>
    </lineage>
</organism>
<reference key="1">
    <citation type="journal article" date="2010" name="Genome Biol.">
        <title>Structure and dynamics of the pan-genome of Streptococcus pneumoniae and closely related species.</title>
        <authorList>
            <person name="Donati C."/>
            <person name="Hiller N.L."/>
            <person name="Tettelin H."/>
            <person name="Muzzi A."/>
            <person name="Croucher N.J."/>
            <person name="Angiuoli S.V."/>
            <person name="Oggioni M."/>
            <person name="Dunning Hotopp J.C."/>
            <person name="Hu F.Z."/>
            <person name="Riley D.R."/>
            <person name="Covacci A."/>
            <person name="Mitchell T.J."/>
            <person name="Bentley S.D."/>
            <person name="Kilian M."/>
            <person name="Ehrlich G.D."/>
            <person name="Rappuoli R."/>
            <person name="Moxon E.R."/>
            <person name="Masignani V."/>
        </authorList>
    </citation>
    <scope>NUCLEOTIDE SEQUENCE [LARGE SCALE GENOMIC DNA]</scope>
    <source>
        <strain>70585</strain>
    </source>
</reference>